<comment type="function">
    <text evidence="1">Could be a nuclease involved in processing of the 5'-end of pre-16S rRNA.</text>
</comment>
<comment type="subcellular location">
    <subcellularLocation>
        <location evidence="1">Cytoplasm</location>
    </subcellularLocation>
</comment>
<comment type="similarity">
    <text evidence="1">Belongs to the YqgF nuclease family.</text>
</comment>
<sequence length="146" mass="15932">MAALRLLLGIDYGTKQIGVAVGQAITGQARELCTLKAQNGVPDWDKVQALINEWKPDAIVVGLPLNMDGTPSDMSARAEKFSRKLNGRFGVTVYTHDERLTTFEAKGERMARGGQKGSYRNNPVDAIAAALLLQGWLDEHPELLNV</sequence>
<gene>
    <name type="ordered locus">PSPPH_0475</name>
</gene>
<evidence type="ECO:0000255" key="1">
    <source>
        <dbReference type="HAMAP-Rule" id="MF_00651"/>
    </source>
</evidence>
<organism>
    <name type="scientific">Pseudomonas savastanoi pv. phaseolicola (strain 1448A / Race 6)</name>
    <name type="common">Pseudomonas syringae pv. phaseolicola (strain 1448A / Race 6)</name>
    <dbReference type="NCBI Taxonomy" id="264730"/>
    <lineage>
        <taxon>Bacteria</taxon>
        <taxon>Pseudomonadati</taxon>
        <taxon>Pseudomonadota</taxon>
        <taxon>Gammaproteobacteria</taxon>
        <taxon>Pseudomonadales</taxon>
        <taxon>Pseudomonadaceae</taxon>
        <taxon>Pseudomonas</taxon>
    </lineage>
</organism>
<dbReference type="EC" id="3.1.-.-" evidence="1"/>
<dbReference type="EMBL" id="CP000058">
    <property type="protein sequence ID" value="AAZ37404.1"/>
    <property type="molecule type" value="Genomic_DNA"/>
</dbReference>
<dbReference type="SMR" id="Q48P91"/>
<dbReference type="KEGG" id="psp:PSPPH_0475"/>
<dbReference type="eggNOG" id="COG0816">
    <property type="taxonomic scope" value="Bacteria"/>
</dbReference>
<dbReference type="HOGENOM" id="CLU_098240_3_0_6"/>
<dbReference type="Proteomes" id="UP000000551">
    <property type="component" value="Chromosome"/>
</dbReference>
<dbReference type="GO" id="GO:0005829">
    <property type="term" value="C:cytosol"/>
    <property type="evidence" value="ECO:0007669"/>
    <property type="project" value="TreeGrafter"/>
</dbReference>
<dbReference type="GO" id="GO:0004518">
    <property type="term" value="F:nuclease activity"/>
    <property type="evidence" value="ECO:0007669"/>
    <property type="project" value="UniProtKB-KW"/>
</dbReference>
<dbReference type="GO" id="GO:0000967">
    <property type="term" value="P:rRNA 5'-end processing"/>
    <property type="evidence" value="ECO:0007669"/>
    <property type="project" value="UniProtKB-UniRule"/>
</dbReference>
<dbReference type="CDD" id="cd16964">
    <property type="entry name" value="YqgF"/>
    <property type="match status" value="1"/>
</dbReference>
<dbReference type="Gene3D" id="3.30.420.140">
    <property type="entry name" value="YqgF/RNase H-like domain"/>
    <property type="match status" value="1"/>
</dbReference>
<dbReference type="HAMAP" id="MF_00651">
    <property type="entry name" value="Nuclease_YqgF"/>
    <property type="match status" value="1"/>
</dbReference>
<dbReference type="InterPro" id="IPR012337">
    <property type="entry name" value="RNaseH-like_sf"/>
</dbReference>
<dbReference type="InterPro" id="IPR005227">
    <property type="entry name" value="YqgF"/>
</dbReference>
<dbReference type="InterPro" id="IPR006641">
    <property type="entry name" value="YqgF/RNaseH-like_dom"/>
</dbReference>
<dbReference type="InterPro" id="IPR037027">
    <property type="entry name" value="YqgF/RNaseH-like_dom_sf"/>
</dbReference>
<dbReference type="NCBIfam" id="TIGR00250">
    <property type="entry name" value="RNAse_H_YqgF"/>
    <property type="match status" value="1"/>
</dbReference>
<dbReference type="PANTHER" id="PTHR33317">
    <property type="entry name" value="POLYNUCLEOTIDYL TRANSFERASE, RIBONUCLEASE H-LIKE SUPERFAMILY PROTEIN"/>
    <property type="match status" value="1"/>
</dbReference>
<dbReference type="PANTHER" id="PTHR33317:SF4">
    <property type="entry name" value="POLYNUCLEOTIDYL TRANSFERASE, RIBONUCLEASE H-LIKE SUPERFAMILY PROTEIN"/>
    <property type="match status" value="1"/>
</dbReference>
<dbReference type="Pfam" id="PF03652">
    <property type="entry name" value="RuvX"/>
    <property type="match status" value="1"/>
</dbReference>
<dbReference type="SMART" id="SM00732">
    <property type="entry name" value="YqgFc"/>
    <property type="match status" value="1"/>
</dbReference>
<dbReference type="SUPFAM" id="SSF53098">
    <property type="entry name" value="Ribonuclease H-like"/>
    <property type="match status" value="1"/>
</dbReference>
<name>YQGF_PSE14</name>
<protein>
    <recommendedName>
        <fullName evidence="1">Putative pre-16S rRNA nuclease</fullName>
        <ecNumber evidence="1">3.1.-.-</ecNumber>
    </recommendedName>
</protein>
<accession>Q48P91</accession>
<proteinExistence type="inferred from homology"/>
<reference key="1">
    <citation type="journal article" date="2005" name="J. Bacteriol.">
        <title>Whole-genome sequence analysis of Pseudomonas syringae pv. phaseolicola 1448A reveals divergence among pathovars in genes involved in virulence and transposition.</title>
        <authorList>
            <person name="Joardar V."/>
            <person name="Lindeberg M."/>
            <person name="Jackson R.W."/>
            <person name="Selengut J."/>
            <person name="Dodson R."/>
            <person name="Brinkac L.M."/>
            <person name="Daugherty S.C."/>
            <person name="DeBoy R.T."/>
            <person name="Durkin A.S."/>
            <person name="Gwinn Giglio M."/>
            <person name="Madupu R."/>
            <person name="Nelson W.C."/>
            <person name="Rosovitz M.J."/>
            <person name="Sullivan S.A."/>
            <person name="Crabtree J."/>
            <person name="Creasy T."/>
            <person name="Davidsen T.M."/>
            <person name="Haft D.H."/>
            <person name="Zafar N."/>
            <person name="Zhou L."/>
            <person name="Halpin R."/>
            <person name="Holley T."/>
            <person name="Khouri H.M."/>
            <person name="Feldblyum T.V."/>
            <person name="White O."/>
            <person name="Fraser C.M."/>
            <person name="Chatterjee A.K."/>
            <person name="Cartinhour S."/>
            <person name="Schneider D."/>
            <person name="Mansfield J.W."/>
            <person name="Collmer A."/>
            <person name="Buell R."/>
        </authorList>
    </citation>
    <scope>NUCLEOTIDE SEQUENCE [LARGE SCALE GENOMIC DNA]</scope>
    <source>
        <strain>1448A / Race 6</strain>
    </source>
</reference>
<keyword id="KW-0963">Cytoplasm</keyword>
<keyword id="KW-0378">Hydrolase</keyword>
<keyword id="KW-0540">Nuclease</keyword>
<keyword id="KW-0690">Ribosome biogenesis</keyword>
<feature type="chain" id="PRO_0000257567" description="Putative pre-16S rRNA nuclease">
    <location>
        <begin position="1"/>
        <end position="146"/>
    </location>
</feature>